<keyword id="KW-0997">Cell inner membrane</keyword>
<keyword id="KW-1003">Cell membrane</keyword>
<keyword id="KW-0472">Membrane</keyword>
<keyword id="KW-1185">Reference proteome</keyword>
<keyword id="KW-0677">Repeat</keyword>
<keyword id="KW-0812">Transmembrane</keyword>
<keyword id="KW-1133">Transmembrane helix</keyword>
<keyword id="KW-0813">Transport</keyword>
<proteinExistence type="inferred from homology"/>
<accession>P0AER1</accession>
<accession>P11244</accession>
<accession>Q46727</accession>
<gene>
    <name type="primary">glpF</name>
    <name type="ordered locus">c4879</name>
</gene>
<sequence length="281" mass="29780">MSQTSTLKGQCIAEFLGTGLLIFFGVGCVAALKVAGASFGQWEISVIWGLGVAMAIYLTAGVSGAHLNPAVTIALWLFACFDKRKVIPFIVSQVAGAFCAAALVYGLYYNLFFDFEQTHHIVRGSVESVDLAGTFSTYPNPHINFVQAFAVEMVITAILMGLILALTDDGNGVPRGPLAPLLIGLLIAVIGASMGPLTGFAMNPARDFGPKVFAWLAGWGNVAFTGGRDIPYFLVPLFGPIVGAIVGAFAYRKLIGRHLPCDICVVEEKETTTPSEQKASL</sequence>
<reference key="1">
    <citation type="journal article" date="2002" name="Proc. Natl. Acad. Sci. U.S.A.">
        <title>Extensive mosaic structure revealed by the complete genome sequence of uropathogenic Escherichia coli.</title>
        <authorList>
            <person name="Welch R.A."/>
            <person name="Burland V."/>
            <person name="Plunkett G. III"/>
            <person name="Redford P."/>
            <person name="Roesch P."/>
            <person name="Rasko D."/>
            <person name="Buckles E.L."/>
            <person name="Liou S.-R."/>
            <person name="Boutin A."/>
            <person name="Hackett J."/>
            <person name="Stroud D."/>
            <person name="Mayhew G.F."/>
            <person name="Rose D.J."/>
            <person name="Zhou S."/>
            <person name="Schwartz D.C."/>
            <person name="Perna N.T."/>
            <person name="Mobley H.L.T."/>
            <person name="Donnenberg M.S."/>
            <person name="Blattner F.R."/>
        </authorList>
    </citation>
    <scope>NUCLEOTIDE SEQUENCE [LARGE SCALE GENOMIC DNA]</scope>
    <source>
        <strain>CFT073 / ATCC 700928 / UPEC</strain>
    </source>
</reference>
<feature type="chain" id="PRO_0000064082" description="Glycerol uptake facilitator protein">
    <location>
        <begin position="1"/>
        <end position="281"/>
    </location>
</feature>
<feature type="topological domain" description="Cytoplasmic" evidence="1">
    <location>
        <begin position="1"/>
        <end position="5"/>
    </location>
</feature>
<feature type="transmembrane region" description="Helical; Name=M1" evidence="1">
    <location>
        <begin position="6"/>
        <end position="34"/>
    </location>
</feature>
<feature type="topological domain" description="Periplasmic" evidence="1">
    <location>
        <begin position="35"/>
        <end position="39"/>
    </location>
</feature>
<feature type="transmembrane region" description="Helical; Name=M2" evidence="1">
    <location>
        <begin position="40"/>
        <end position="60"/>
    </location>
</feature>
<feature type="topological domain" description="Cytoplasmic" evidence="1">
    <location>
        <begin position="61"/>
        <end position="63"/>
    </location>
</feature>
<feature type="intramembrane region" evidence="1">
    <location>
        <begin position="64"/>
        <end position="67"/>
    </location>
</feature>
<feature type="intramembrane region" description="Helical; Name=M3" evidence="1">
    <location>
        <begin position="68"/>
        <end position="78"/>
    </location>
</feature>
<feature type="topological domain" description="Cytoplasmic" evidence="1">
    <location>
        <begin position="79"/>
        <end position="84"/>
    </location>
</feature>
<feature type="transmembrane region" description="Helical; Name=M4" evidence="1">
    <location>
        <begin position="85"/>
        <end position="108"/>
    </location>
</feature>
<feature type="topological domain" description="Periplasmic" evidence="1">
    <location>
        <begin position="109"/>
        <end position="143"/>
    </location>
</feature>
<feature type="transmembrane region" description="Helical; Name=M5" evidence="1">
    <location>
        <begin position="144"/>
        <end position="169"/>
    </location>
</feature>
<feature type="topological domain" description="Cytoplasmic" evidence="1">
    <location>
        <begin position="170"/>
        <end position="177"/>
    </location>
</feature>
<feature type="transmembrane region" description="Helical; Name=M6" evidence="1">
    <location>
        <begin position="178"/>
        <end position="194"/>
    </location>
</feature>
<feature type="topological domain" description="Periplasmic" evidence="1">
    <location>
        <begin position="195"/>
        <end position="198"/>
    </location>
</feature>
<feature type="intramembrane region" evidence="1">
    <location>
        <begin position="199"/>
        <end position="202"/>
    </location>
</feature>
<feature type="intramembrane region" description="Helical; Name=M7" evidence="1">
    <location>
        <begin position="203"/>
        <end position="216"/>
    </location>
</feature>
<feature type="topological domain" description="Periplasmic" evidence="1">
    <location>
        <begin position="217"/>
        <end position="231"/>
    </location>
</feature>
<feature type="transmembrane region" description="Helical; Name=M8" evidence="1">
    <location>
        <begin position="232"/>
        <end position="254"/>
    </location>
</feature>
<feature type="topological domain" description="Cytoplasmic" evidence="1">
    <location>
        <begin position="255"/>
        <end position="281"/>
    </location>
</feature>
<feature type="short sequence motif" description="NPA 1" evidence="2">
    <location>
        <begin position="68"/>
        <end position="70"/>
    </location>
</feature>
<feature type="short sequence motif" description="NPA 2" evidence="2">
    <location>
        <begin position="203"/>
        <end position="205"/>
    </location>
</feature>
<feature type="site" description="Substrate discrimination" evidence="1">
    <location>
        <position position="48"/>
    </location>
</feature>
<feature type="site" description="Substrate discrimination" evidence="1">
    <location>
        <position position="200"/>
    </location>
</feature>
<feature type="site" description="Substrate discrimination" evidence="1">
    <location>
        <position position="206"/>
    </location>
</feature>
<name>GLPF_ECOL6</name>
<organism>
    <name type="scientific">Escherichia coli O6:H1 (strain CFT073 / ATCC 700928 / UPEC)</name>
    <dbReference type="NCBI Taxonomy" id="199310"/>
    <lineage>
        <taxon>Bacteria</taxon>
        <taxon>Pseudomonadati</taxon>
        <taxon>Pseudomonadota</taxon>
        <taxon>Gammaproteobacteria</taxon>
        <taxon>Enterobacterales</taxon>
        <taxon>Enterobacteriaceae</taxon>
        <taxon>Escherichia</taxon>
    </lineage>
</organism>
<evidence type="ECO:0000250" key="1">
    <source>
        <dbReference type="UniProtKB" id="P0AER0"/>
    </source>
</evidence>
<evidence type="ECO:0000305" key="2"/>
<dbReference type="EMBL" id="AE014075">
    <property type="protein sequence ID" value="AAN83307.1"/>
    <property type="molecule type" value="Genomic_DNA"/>
</dbReference>
<dbReference type="RefSeq" id="WP_000084268.1">
    <property type="nucleotide sequence ID" value="NZ_CP051263.1"/>
</dbReference>
<dbReference type="SMR" id="P0AER1"/>
<dbReference type="STRING" id="199310.c4879"/>
<dbReference type="GeneID" id="93777971"/>
<dbReference type="KEGG" id="ecc:c4879"/>
<dbReference type="eggNOG" id="COG0580">
    <property type="taxonomic scope" value="Bacteria"/>
</dbReference>
<dbReference type="HOGENOM" id="CLU_020019_9_3_6"/>
<dbReference type="BioCyc" id="ECOL199310:C4879-MONOMER"/>
<dbReference type="Proteomes" id="UP000001410">
    <property type="component" value="Chromosome"/>
</dbReference>
<dbReference type="GO" id="GO:0005886">
    <property type="term" value="C:plasma membrane"/>
    <property type="evidence" value="ECO:0007669"/>
    <property type="project" value="UniProtKB-SubCell"/>
</dbReference>
<dbReference type="GO" id="GO:0015254">
    <property type="term" value="F:glycerol channel activity"/>
    <property type="evidence" value="ECO:0007669"/>
    <property type="project" value="TreeGrafter"/>
</dbReference>
<dbReference type="CDD" id="cd00333">
    <property type="entry name" value="MIP"/>
    <property type="match status" value="1"/>
</dbReference>
<dbReference type="FunFam" id="1.20.1080.10:FF:000004">
    <property type="entry name" value="Glycerol facilitator"/>
    <property type="match status" value="1"/>
</dbReference>
<dbReference type="Gene3D" id="1.20.1080.10">
    <property type="entry name" value="Glycerol uptake facilitator protein"/>
    <property type="match status" value="1"/>
</dbReference>
<dbReference type="InterPro" id="IPR023271">
    <property type="entry name" value="Aquaporin-like"/>
</dbReference>
<dbReference type="InterPro" id="IPR000425">
    <property type="entry name" value="MIP"/>
</dbReference>
<dbReference type="InterPro" id="IPR050363">
    <property type="entry name" value="MIP/Aquaporin"/>
</dbReference>
<dbReference type="InterPro" id="IPR022357">
    <property type="entry name" value="MIP_CS"/>
</dbReference>
<dbReference type="NCBIfam" id="TIGR00861">
    <property type="entry name" value="MIP"/>
    <property type="match status" value="1"/>
</dbReference>
<dbReference type="PANTHER" id="PTHR43829">
    <property type="entry name" value="AQUAPORIN OR AQUAGLYCEROPORIN RELATED"/>
    <property type="match status" value="1"/>
</dbReference>
<dbReference type="PANTHER" id="PTHR43829:SF9">
    <property type="entry name" value="AQUAPORIN-9"/>
    <property type="match status" value="1"/>
</dbReference>
<dbReference type="Pfam" id="PF00230">
    <property type="entry name" value="MIP"/>
    <property type="match status" value="1"/>
</dbReference>
<dbReference type="PRINTS" id="PR00783">
    <property type="entry name" value="MINTRINSICP"/>
</dbReference>
<dbReference type="SUPFAM" id="SSF81338">
    <property type="entry name" value="Aquaporin-like"/>
    <property type="match status" value="1"/>
</dbReference>
<dbReference type="PROSITE" id="PS00221">
    <property type="entry name" value="MIP"/>
    <property type="match status" value="1"/>
</dbReference>
<comment type="function">
    <text evidence="1">Mediates glycerol diffusion across the cytoplasmic membrane via a pore-type mechanism.</text>
</comment>
<comment type="catalytic activity">
    <reaction evidence="1">
        <text>glycerol(in) = glycerol(out)</text>
        <dbReference type="Rhea" id="RHEA:29675"/>
        <dbReference type="ChEBI" id="CHEBI:17754"/>
    </reaction>
</comment>
<comment type="subunit">
    <text evidence="1">Homotetramer.</text>
</comment>
<comment type="subcellular location">
    <subcellularLocation>
        <location evidence="1">Cell inner membrane</location>
        <topology evidence="1">Multi-pass membrane protein</topology>
    </subcellularLocation>
</comment>
<comment type="domain">
    <text evidence="2">Aquaporins contain two tandem repeats each containing three membrane-spanning domains and a pore-forming loop with the signature motif Asn-Pro-Ala (NPA).</text>
</comment>
<comment type="similarity">
    <text evidence="2">Belongs to the MIP/aquaporin (TC 1.A.8) family.</text>
</comment>
<protein>
    <recommendedName>
        <fullName evidence="1">Glycerol uptake facilitator protein</fullName>
    </recommendedName>
    <alternativeName>
        <fullName>Aquaglyceroporin</fullName>
    </alternativeName>
</protein>